<organism>
    <name type="scientific">Campylobacter jejuni subsp. jejuni serotype O:2 (strain ATCC 700819 / NCTC 11168)</name>
    <dbReference type="NCBI Taxonomy" id="192222"/>
    <lineage>
        <taxon>Bacteria</taxon>
        <taxon>Pseudomonadati</taxon>
        <taxon>Campylobacterota</taxon>
        <taxon>Epsilonproteobacteria</taxon>
        <taxon>Campylobacterales</taxon>
        <taxon>Campylobacteraceae</taxon>
        <taxon>Campylobacter</taxon>
    </lineage>
</organism>
<comment type="function">
    <text evidence="1">A type II topoisomerase that negatively supercoils closed circular double-stranded (ds) DNA in an ATP-dependent manner to modulate DNA topology and maintain chromosomes in an underwound state. Negative supercoiling favors strand separation, and DNA replication, transcription, recombination and repair, all of which involve strand separation. Also able to catalyze the interconversion of other topological isomers of dsDNA rings, including catenanes and knotted rings. Type II topoisomerases break and join 2 DNA strands simultaneously in an ATP-dependent manner.</text>
</comment>
<comment type="catalytic activity">
    <reaction evidence="1">
        <text>ATP-dependent breakage, passage and rejoining of double-stranded DNA.</text>
        <dbReference type="EC" id="5.6.2.2"/>
    </reaction>
</comment>
<comment type="subunit">
    <text evidence="1">Heterotetramer, composed of two GyrA and two GyrB chains. In the heterotetramer, GyrA contains the active site tyrosine that forms a transient covalent intermediate with DNA, while GyrB binds cofactors and catalyzes ATP hydrolysis.</text>
</comment>
<comment type="subcellular location">
    <subcellularLocation>
        <location evidence="1">Cytoplasm</location>
    </subcellularLocation>
</comment>
<comment type="miscellaneous">
    <text evidence="1">Few gyrases are as efficient as E.coli at forming negative supercoils. Not all organisms have 2 type II topoisomerases; in organisms with a single type II topoisomerase this enzyme also has to decatenate newly replicated chromosomes.</text>
</comment>
<comment type="similarity">
    <text evidence="1">Belongs to the type II topoisomerase GyrA/ParC subunit family.</text>
</comment>
<feature type="chain" id="PRO_0000145227" description="DNA gyrase subunit A">
    <location>
        <begin position="1"/>
        <end position="863"/>
    </location>
</feature>
<feature type="domain" description="Topo IIA-type catalytic" evidence="2">
    <location>
        <begin position="37"/>
        <end position="500"/>
    </location>
</feature>
<feature type="short sequence motif" description="GyrA-box" evidence="1">
    <location>
        <begin position="527"/>
        <end position="533"/>
    </location>
</feature>
<feature type="active site" description="O-(5'-phospho-DNA)-tyrosine intermediate" evidence="1">
    <location>
        <position position="125"/>
    </location>
</feature>
<feature type="sequence variant" description="In strain: UA67; confers resistance to nalidixic acid and ciprofloxacin.">
    <original>A</original>
    <variation>T</variation>
    <location>
        <position position="70"/>
    </location>
</feature>
<feature type="sequence variant" description="In strain: UA580R1, UA536, UA543 and UA549; confers resistance to nalidixic acid and ciprofloxacin.">
    <original>T</original>
    <variation>I</variation>
    <location>
        <position position="86"/>
    </location>
</feature>
<feature type="sequence variant" description="In strain: UA580R3; confers resistance to nalidixic acid and ciprofloxacin.">
    <original>D</original>
    <variation>N</variation>
    <location>
        <position position="90"/>
    </location>
</feature>
<evidence type="ECO:0000255" key="1">
    <source>
        <dbReference type="HAMAP-Rule" id="MF_01897"/>
    </source>
</evidence>
<evidence type="ECO:0000255" key="2">
    <source>
        <dbReference type="PROSITE-ProRule" id="PRU01384"/>
    </source>
</evidence>
<sequence length="863" mass="96974">MENIFSKDSDIELVDIENSIKSSYLDYSMSVIIGRALPDARDGLKPVHRRILYAMQNDEAKSRTDFVKSARIVGAVIGRYHPHGDTAVYDALVRMAQDFSMRYPSITGQGNFGSIDGDSAAAMRYTEAKMSKLSHELLKDIDKDTVDFVPNYDGSESEPDVLPSRVPNLLLNGSSGIAVGMATNIPPHSLNELIDGLLYLLDNKDASLEEIMQFIKGPDFPTGGIIYGKKGIIEAYRTGRGRVKVRAKTHIEKKTNKDVIVIDELPYQTNKARLIEQIAELVKERQIEGISEVRDESNKEGIRVVIELKREAMSEIVLNNLFKSTTMESTFGVIMLAIHNKEPKIFSLLELLNLFLTHRKTVIIRRTIFELQKARARAHILEGLKIALDNIDEVIALIKNSSDNNTARDSLVAKFGLSELQANAILDMKLGRLTGLEREKIENELAELMKEIARLEEILKSETLLENLIRDELKEIRSKFDVPRITQIEDDYDDIDIEDLIPNENMVVTITHRGYIKRVPSKQYEKQKRGGKGKLAVTTYDDDFIESFFTANTHDTLMFVTDRGQLYWLKVYKIPEGSRTAKGKAVVNLINLQAEEKIMAIIPTTDFDESKSLCFFTKNGIVKRTNLSEYQNIRSVGVRAINLDENDELVTAIIVQRDEDEIFATGGEENLENQEIENLDDENLENEESVSTQGKMLFAVTKKGMCIKFPLAKVREIGRVSRGVTAIKFKEKNDELVGAVVIENDEQEILSISAKGIGKRTNAGEYRLQSRGGKGVICMKLTEKTKDLISVVIVDETMDLMALTSSGKMIRVDMQSIRKAGRNTSGVIVVNVENDEVVSIAKCPKEENDEDELSDENFGLDLQ</sequence>
<name>GYRA_CAMJE</name>
<gene>
    <name evidence="1" type="primary">gyrA</name>
    <name type="ordered locus">Cj1027c</name>
</gene>
<protein>
    <recommendedName>
        <fullName evidence="1">DNA gyrase subunit A</fullName>
        <ecNumber evidence="1">5.6.2.2</ecNumber>
    </recommendedName>
</protein>
<keyword id="KW-0046">Antibiotic resistance</keyword>
<keyword id="KW-0067">ATP-binding</keyword>
<keyword id="KW-0963">Cytoplasm</keyword>
<keyword id="KW-0238">DNA-binding</keyword>
<keyword id="KW-0413">Isomerase</keyword>
<keyword id="KW-0547">Nucleotide-binding</keyword>
<keyword id="KW-1185">Reference proteome</keyword>
<keyword id="KW-0799">Topoisomerase</keyword>
<reference key="1">
    <citation type="journal article" date="1993" name="Antimicrob. Agents Chemother.">
        <title>Cloning and nucleotide sequence of the Campylobacter jejuni gyrA gene and characterization of quinolone resistance mutations.</title>
        <authorList>
            <person name="Wang Y."/>
            <person name="Huang W.M."/>
            <person name="Taylor D.E."/>
        </authorList>
    </citation>
    <scope>NUCLEOTIDE SEQUENCE [GENOMIC DNA]</scope>
    <source>
        <strain>UA580</strain>
    </source>
</reference>
<reference key="2">
    <citation type="journal article" date="2000" name="Nature">
        <title>The genome sequence of the food-borne pathogen Campylobacter jejuni reveals hypervariable sequences.</title>
        <authorList>
            <person name="Parkhill J."/>
            <person name="Wren B.W."/>
            <person name="Mungall K.L."/>
            <person name="Ketley J.M."/>
            <person name="Churcher C.M."/>
            <person name="Basham D."/>
            <person name="Chillingworth T."/>
            <person name="Davies R.M."/>
            <person name="Feltwell T."/>
            <person name="Holroyd S."/>
            <person name="Jagels K."/>
            <person name="Karlyshev A.V."/>
            <person name="Moule S."/>
            <person name="Pallen M.J."/>
            <person name="Penn C.W."/>
            <person name="Quail M.A."/>
            <person name="Rajandream M.A."/>
            <person name="Rutherford K.M."/>
            <person name="van Vliet A.H.M."/>
            <person name="Whitehead S."/>
            <person name="Barrell B.G."/>
        </authorList>
    </citation>
    <scope>NUCLEOTIDE SEQUENCE [LARGE SCALE GENOMIC DNA]</scope>
    <source>
        <strain>ATCC 700819 / NCTC 11168</strain>
    </source>
</reference>
<accession>Q03470</accession>
<accession>Q0P9M5</accession>
<dbReference type="EC" id="5.6.2.2" evidence="1"/>
<dbReference type="EMBL" id="L04566">
    <property type="protein sequence ID" value="AAA23028.1"/>
    <property type="molecule type" value="Genomic_DNA"/>
</dbReference>
<dbReference type="EMBL" id="AL111168">
    <property type="protein sequence ID" value="CAL35145.1"/>
    <property type="molecule type" value="Genomic_DNA"/>
</dbReference>
<dbReference type="PIR" id="A48902">
    <property type="entry name" value="A48902"/>
</dbReference>
<dbReference type="RefSeq" id="WP_002857904.1">
    <property type="nucleotide sequence ID" value="NZ_SZUC01000001.1"/>
</dbReference>
<dbReference type="RefSeq" id="YP_002344422.1">
    <property type="nucleotide sequence ID" value="NC_002163.1"/>
</dbReference>
<dbReference type="SMR" id="Q03470"/>
<dbReference type="IntAct" id="Q03470">
    <property type="interactions" value="23"/>
</dbReference>
<dbReference type="STRING" id="192222.Cj1027c"/>
<dbReference type="PaxDb" id="192222-Cj1027c"/>
<dbReference type="EnsemblBacteria" id="CAL35145">
    <property type="protein sequence ID" value="CAL35145"/>
    <property type="gene ID" value="Cj1027c"/>
</dbReference>
<dbReference type="GeneID" id="905319"/>
<dbReference type="KEGG" id="cje:Cj1027c"/>
<dbReference type="PATRIC" id="fig|192222.6.peg.1009"/>
<dbReference type="eggNOG" id="COG0188">
    <property type="taxonomic scope" value="Bacteria"/>
</dbReference>
<dbReference type="HOGENOM" id="CLU_002977_6_1_7"/>
<dbReference type="OrthoDB" id="9806486at2"/>
<dbReference type="PHI-base" id="PHI:9790"/>
<dbReference type="Proteomes" id="UP000000799">
    <property type="component" value="Chromosome"/>
</dbReference>
<dbReference type="GO" id="GO:0005694">
    <property type="term" value="C:chromosome"/>
    <property type="evidence" value="ECO:0007669"/>
    <property type="project" value="InterPro"/>
</dbReference>
<dbReference type="GO" id="GO:0005737">
    <property type="term" value="C:cytoplasm"/>
    <property type="evidence" value="ECO:0007669"/>
    <property type="project" value="UniProtKB-SubCell"/>
</dbReference>
<dbReference type="GO" id="GO:0009330">
    <property type="term" value="C:DNA topoisomerase type II (double strand cut, ATP-hydrolyzing) complex"/>
    <property type="evidence" value="ECO:0007669"/>
    <property type="project" value="TreeGrafter"/>
</dbReference>
<dbReference type="GO" id="GO:0005524">
    <property type="term" value="F:ATP binding"/>
    <property type="evidence" value="ECO:0007669"/>
    <property type="project" value="UniProtKB-UniRule"/>
</dbReference>
<dbReference type="GO" id="GO:0003677">
    <property type="term" value="F:DNA binding"/>
    <property type="evidence" value="ECO:0007669"/>
    <property type="project" value="UniProtKB-UniRule"/>
</dbReference>
<dbReference type="GO" id="GO:0034335">
    <property type="term" value="F:DNA negative supercoiling activity"/>
    <property type="evidence" value="ECO:0007669"/>
    <property type="project" value="UniProtKB-ARBA"/>
</dbReference>
<dbReference type="GO" id="GO:0006265">
    <property type="term" value="P:DNA topological change"/>
    <property type="evidence" value="ECO:0007669"/>
    <property type="project" value="UniProtKB-UniRule"/>
</dbReference>
<dbReference type="GO" id="GO:0006261">
    <property type="term" value="P:DNA-templated DNA replication"/>
    <property type="evidence" value="ECO:0007669"/>
    <property type="project" value="UniProtKB-UniRule"/>
</dbReference>
<dbReference type="GO" id="GO:0046677">
    <property type="term" value="P:response to antibiotic"/>
    <property type="evidence" value="ECO:0007669"/>
    <property type="project" value="UniProtKB-KW"/>
</dbReference>
<dbReference type="CDD" id="cd00187">
    <property type="entry name" value="TOP4c"/>
    <property type="match status" value="1"/>
</dbReference>
<dbReference type="FunFam" id="1.10.268.10:FF:000001">
    <property type="entry name" value="DNA gyrase subunit A"/>
    <property type="match status" value="1"/>
</dbReference>
<dbReference type="FunFam" id="3.30.1360.40:FF:000002">
    <property type="entry name" value="DNA gyrase subunit A"/>
    <property type="match status" value="1"/>
</dbReference>
<dbReference type="FunFam" id="3.90.199.10:FF:000001">
    <property type="entry name" value="DNA gyrase subunit A"/>
    <property type="match status" value="1"/>
</dbReference>
<dbReference type="Gene3D" id="3.30.1360.40">
    <property type="match status" value="1"/>
</dbReference>
<dbReference type="Gene3D" id="2.120.10.90">
    <property type="entry name" value="DNA gyrase/topoisomerase IV, subunit A, C-terminal"/>
    <property type="match status" value="1"/>
</dbReference>
<dbReference type="Gene3D" id="3.90.199.10">
    <property type="entry name" value="Topoisomerase II, domain 5"/>
    <property type="match status" value="1"/>
</dbReference>
<dbReference type="Gene3D" id="1.10.268.10">
    <property type="entry name" value="Topoisomerase, domain 3"/>
    <property type="match status" value="1"/>
</dbReference>
<dbReference type="HAMAP" id="MF_01897">
    <property type="entry name" value="GyrA"/>
    <property type="match status" value="1"/>
</dbReference>
<dbReference type="InterPro" id="IPR005743">
    <property type="entry name" value="GyrA"/>
</dbReference>
<dbReference type="InterPro" id="IPR006691">
    <property type="entry name" value="GyrA/parC_rep"/>
</dbReference>
<dbReference type="InterPro" id="IPR035516">
    <property type="entry name" value="Gyrase/topoIV_suA_C"/>
</dbReference>
<dbReference type="InterPro" id="IPR013760">
    <property type="entry name" value="Topo_IIA-like_dom_sf"/>
</dbReference>
<dbReference type="InterPro" id="IPR013758">
    <property type="entry name" value="Topo_IIA_A/C_ab"/>
</dbReference>
<dbReference type="InterPro" id="IPR013757">
    <property type="entry name" value="Topo_IIA_A_a_sf"/>
</dbReference>
<dbReference type="InterPro" id="IPR002205">
    <property type="entry name" value="Topo_IIA_dom_A"/>
</dbReference>
<dbReference type="InterPro" id="IPR050220">
    <property type="entry name" value="Type_II_DNA_Topoisomerases"/>
</dbReference>
<dbReference type="NCBIfam" id="TIGR01063">
    <property type="entry name" value="gyrA"/>
    <property type="match status" value="1"/>
</dbReference>
<dbReference type="NCBIfam" id="NF004043">
    <property type="entry name" value="PRK05560.1"/>
    <property type="match status" value="1"/>
</dbReference>
<dbReference type="NCBIfam" id="NF004044">
    <property type="entry name" value="PRK05561.1"/>
    <property type="match status" value="1"/>
</dbReference>
<dbReference type="PANTHER" id="PTHR43493:SF5">
    <property type="entry name" value="DNA GYRASE SUBUNIT A, CHLOROPLASTIC_MITOCHONDRIAL"/>
    <property type="match status" value="1"/>
</dbReference>
<dbReference type="PANTHER" id="PTHR43493">
    <property type="entry name" value="DNA GYRASE/TOPOISOMERASE SUBUNIT A"/>
    <property type="match status" value="1"/>
</dbReference>
<dbReference type="Pfam" id="PF03989">
    <property type="entry name" value="DNA_gyraseA_C"/>
    <property type="match status" value="6"/>
</dbReference>
<dbReference type="Pfam" id="PF00521">
    <property type="entry name" value="DNA_topoisoIV"/>
    <property type="match status" value="1"/>
</dbReference>
<dbReference type="SMART" id="SM00434">
    <property type="entry name" value="TOP4c"/>
    <property type="match status" value="1"/>
</dbReference>
<dbReference type="SUPFAM" id="SSF101904">
    <property type="entry name" value="GyrA/ParC C-terminal domain-like"/>
    <property type="match status" value="1"/>
</dbReference>
<dbReference type="SUPFAM" id="SSF56719">
    <property type="entry name" value="Type II DNA topoisomerase"/>
    <property type="match status" value="1"/>
</dbReference>
<dbReference type="PROSITE" id="PS52040">
    <property type="entry name" value="TOPO_IIA"/>
    <property type="match status" value="1"/>
</dbReference>
<proteinExistence type="inferred from homology"/>